<sequence>MELAHSLLLNEEALAQITEAKRPVFIFEWLRFLDKVLVAANKTDVKEKQKKLVEQLTGLISSSPGPPTRKLLAKNLAALYSIGDTYTVFQTLDKCNDIIRSKDDTAAYLPTKLAAVACVGAFYEKMGRMLGSAFPETVNNLLKSLKSAESQGRSEILMSLQKVLTGLGGAAASSHRDIYKNARSLLTDRSMAVRCAVAKCLLELQNEAVFMWTAELENVATLCFKALENSNYGVRVAVSKLLGTVMATALMPKQATVMRQNVKRATFDEVLELMATGFLRGGSGFLKSGGEMLKVGGSVNREVRVGVTQAYVVFVTTLGGQWLERSFATFLSHVLDLVSHPRATQTHVDAVYSRRCVSFMLRATVGSLLGEKAQIAAAKEICQAIGKQMKAVEAVVNDTSSENKSGTADIAASQHVMVCALQELGSLVQSLNATASPLIQEASIGLLEIVTSVLLHPSMAARLAAAWCLRCVAVALPFQLTPFLDRCAERLNNLKTSPEAVSGYSFAMAALLGGVHQCPLGIPHAKGKMVVSIAEDLLRTAAQNSRLSLQRTQAGWLLLGALMTLGPSVVRYHLPKMLLLWRNVFPRSLKELEAEKARGDSFTWQVTLEGRAGALCAMRSFVAHCPELLTEDAIRKLMTPIECAMTMMSHIPSVIKAHGAHLKASAAMVRLRLYDILALLPPKTYEGSFNALLRELVAEFTLTDNSANTTTSLLRSLCHYDDSVLLGSWLQETDHKSIEDQLQPNSASGSGALEHDPSSIYLRIPAGEAVPGPLPLGVSVIDASVALFGVVFPHVSYKHRLQMLDHFAECVKQAKGVRQQAVQLNIFTAVLSALKGLAENKSTLGPEEVRKSALTLVMGALDNPNPILRCAAGEALGRMAQVVGEASFIARMAQYSFDKLKSARDVVSRTGHSLALGCLHRYVGGIGSGQHLKTSVSILLALAQDGTSPEVQTWSLHSLALIVDSSGPMYRGYVEPTLSLVLTLLLTVPPSHTEVHQCLGRCLGAIITTVGPELQGNAATISTIRSSCLVGCAITQDHSDSLVQAAAISCLQQLHMFAPRHVNLSSLVPSLCVHLCSSHLLLRRAAVACLRQLAQREAAEVCEYAMSLAKNAGDKEISGGNVNPFTPGVSSRSDVHCRHQGVNITDTGLEGLLFGMLDRETDRKLCSDIHDTLGHMLSSLAVEKLSHWLMLCKDVLAASSDMSAATLLSSGKDEESEKKDEMDDDAMFTTLGEEDKSKPFVAPRWATRVFAADCLCRIINLCENSDQAHFDLALARSAKLRNPKNDLLVLHLSDLIRMAFMAATDHSNQLRMAGLQALEDIIKKFASVPEPEFPGHVILEQYQANVGAALRPAFSQDTPSDIIAKACQVCSTWIGSGVVSDLNDLRRVHNLLVSSLDTVQAGKGSSSQLYRESATTMEKLAVLKAWAEVYVVAMNIKKEAESKPKRAMNNPDDDDDDYGTIDELPPDSLITLVQPELPTLSRLWLAALKDYALLTLPAEFSSQLPPDGGAFYTPETIDTARLHYRNSWAPILHAVALWLNSTGFISQESTEATTVSGVQKRSPAVSLNQVPGAMASAKPLPEVNKDRMHLILGVSIQFLCSPRPEEPIEHVTACLQALHTLLGSPYARIHIAEDQLIGVELLSVLHRLLLTWNPPSIQLLVTGVVQQIVRAAQDYLQEKRNALNEEDMEKESCPTLGEGGDTGGLIPGKSLVFATMELLMFILVRHMPHLSTKMLDSPSHTAMKTQLSEESARLVAATVAILSDLPSLCSPAGCMTILPTILFLIARILKDTAIKSADNQVPPPVSAALQGIKSIVTLSMAKTEDTQKQWTTLIRSTLACILEYSQPDDCMPAPDEVSTLTAIALFLWSASSEIIGVQSLQNGCMNRFKSALNSCDPWVQAKCYQLLLSVFQHSNRALSTPYIHSLAPLVVGKLKAVERHRPASSTELLAVQEGIKVLETLVALGEEQNRVQLLALLVPTLISYLLDENSFASASSISKDLHEFALQNLMHIGPLYPHAFKTVMGAAPELKARLETAVRASQASKAKAAARQPAPTTHSTPTIKLKTSFF</sequence>
<reference key="1">
    <citation type="journal article" date="2005" name="Science">
        <title>The transcriptional landscape of the mammalian genome.</title>
        <authorList>
            <person name="Carninci P."/>
            <person name="Kasukawa T."/>
            <person name="Katayama S."/>
            <person name="Gough J."/>
            <person name="Frith M.C."/>
            <person name="Maeda N."/>
            <person name="Oyama R."/>
            <person name="Ravasi T."/>
            <person name="Lenhard B."/>
            <person name="Wells C."/>
            <person name="Kodzius R."/>
            <person name="Shimokawa K."/>
            <person name="Bajic V.B."/>
            <person name="Brenner S.E."/>
            <person name="Batalov S."/>
            <person name="Forrest A.R."/>
            <person name="Zavolan M."/>
            <person name="Davis M.J."/>
            <person name="Wilming L.G."/>
            <person name="Aidinis V."/>
            <person name="Allen J.E."/>
            <person name="Ambesi-Impiombato A."/>
            <person name="Apweiler R."/>
            <person name="Aturaliya R.N."/>
            <person name="Bailey T.L."/>
            <person name="Bansal M."/>
            <person name="Baxter L."/>
            <person name="Beisel K.W."/>
            <person name="Bersano T."/>
            <person name="Bono H."/>
            <person name="Chalk A.M."/>
            <person name="Chiu K.P."/>
            <person name="Choudhary V."/>
            <person name="Christoffels A."/>
            <person name="Clutterbuck D.R."/>
            <person name="Crowe M.L."/>
            <person name="Dalla E."/>
            <person name="Dalrymple B.P."/>
            <person name="de Bono B."/>
            <person name="Della Gatta G."/>
            <person name="di Bernardo D."/>
            <person name="Down T."/>
            <person name="Engstrom P."/>
            <person name="Fagiolini M."/>
            <person name="Faulkner G."/>
            <person name="Fletcher C.F."/>
            <person name="Fukushima T."/>
            <person name="Furuno M."/>
            <person name="Futaki S."/>
            <person name="Gariboldi M."/>
            <person name="Georgii-Hemming P."/>
            <person name="Gingeras T.R."/>
            <person name="Gojobori T."/>
            <person name="Green R.E."/>
            <person name="Gustincich S."/>
            <person name="Harbers M."/>
            <person name="Hayashi Y."/>
            <person name="Hensch T.K."/>
            <person name="Hirokawa N."/>
            <person name="Hill D."/>
            <person name="Huminiecki L."/>
            <person name="Iacono M."/>
            <person name="Ikeo K."/>
            <person name="Iwama A."/>
            <person name="Ishikawa T."/>
            <person name="Jakt M."/>
            <person name="Kanapin A."/>
            <person name="Katoh M."/>
            <person name="Kawasawa Y."/>
            <person name="Kelso J."/>
            <person name="Kitamura H."/>
            <person name="Kitano H."/>
            <person name="Kollias G."/>
            <person name="Krishnan S.P."/>
            <person name="Kruger A."/>
            <person name="Kummerfeld S.K."/>
            <person name="Kurochkin I.V."/>
            <person name="Lareau L.F."/>
            <person name="Lazarevic D."/>
            <person name="Lipovich L."/>
            <person name="Liu J."/>
            <person name="Liuni S."/>
            <person name="McWilliam S."/>
            <person name="Madan Babu M."/>
            <person name="Madera M."/>
            <person name="Marchionni L."/>
            <person name="Matsuda H."/>
            <person name="Matsuzawa S."/>
            <person name="Miki H."/>
            <person name="Mignone F."/>
            <person name="Miyake S."/>
            <person name="Morris K."/>
            <person name="Mottagui-Tabar S."/>
            <person name="Mulder N."/>
            <person name="Nakano N."/>
            <person name="Nakauchi H."/>
            <person name="Ng P."/>
            <person name="Nilsson R."/>
            <person name="Nishiguchi S."/>
            <person name="Nishikawa S."/>
            <person name="Nori F."/>
            <person name="Ohara O."/>
            <person name="Okazaki Y."/>
            <person name="Orlando V."/>
            <person name="Pang K.C."/>
            <person name="Pavan W.J."/>
            <person name="Pavesi G."/>
            <person name="Pesole G."/>
            <person name="Petrovsky N."/>
            <person name="Piazza S."/>
            <person name="Reed J."/>
            <person name="Reid J.F."/>
            <person name="Ring B.Z."/>
            <person name="Ringwald M."/>
            <person name="Rost B."/>
            <person name="Ruan Y."/>
            <person name="Salzberg S.L."/>
            <person name="Sandelin A."/>
            <person name="Schneider C."/>
            <person name="Schoenbach C."/>
            <person name="Sekiguchi K."/>
            <person name="Semple C.A."/>
            <person name="Seno S."/>
            <person name="Sessa L."/>
            <person name="Sheng Y."/>
            <person name="Shibata Y."/>
            <person name="Shimada H."/>
            <person name="Shimada K."/>
            <person name="Silva D."/>
            <person name="Sinclair B."/>
            <person name="Sperling S."/>
            <person name="Stupka E."/>
            <person name="Sugiura K."/>
            <person name="Sultana R."/>
            <person name="Takenaka Y."/>
            <person name="Taki K."/>
            <person name="Tammoja K."/>
            <person name="Tan S.L."/>
            <person name="Tang S."/>
            <person name="Taylor M.S."/>
            <person name="Tegner J."/>
            <person name="Teichmann S.A."/>
            <person name="Ueda H.R."/>
            <person name="van Nimwegen E."/>
            <person name="Verardo R."/>
            <person name="Wei C.L."/>
            <person name="Yagi K."/>
            <person name="Yamanishi H."/>
            <person name="Zabarovsky E."/>
            <person name="Zhu S."/>
            <person name="Zimmer A."/>
            <person name="Hide W."/>
            <person name="Bult C."/>
            <person name="Grimmond S.M."/>
            <person name="Teasdale R.D."/>
            <person name="Liu E.T."/>
            <person name="Brusic V."/>
            <person name="Quackenbush J."/>
            <person name="Wahlestedt C."/>
            <person name="Mattick J.S."/>
            <person name="Hume D.A."/>
            <person name="Kai C."/>
            <person name="Sasaki D."/>
            <person name="Tomaru Y."/>
            <person name="Fukuda S."/>
            <person name="Kanamori-Katayama M."/>
            <person name="Suzuki M."/>
            <person name="Aoki J."/>
            <person name="Arakawa T."/>
            <person name="Iida J."/>
            <person name="Imamura K."/>
            <person name="Itoh M."/>
            <person name="Kato T."/>
            <person name="Kawaji H."/>
            <person name="Kawagashira N."/>
            <person name="Kawashima T."/>
            <person name="Kojima M."/>
            <person name="Kondo S."/>
            <person name="Konno H."/>
            <person name="Nakano K."/>
            <person name="Ninomiya N."/>
            <person name="Nishio T."/>
            <person name="Okada M."/>
            <person name="Plessy C."/>
            <person name="Shibata K."/>
            <person name="Shiraki T."/>
            <person name="Suzuki S."/>
            <person name="Tagami M."/>
            <person name="Waki K."/>
            <person name="Watahiki A."/>
            <person name="Okamura-Oho Y."/>
            <person name="Suzuki H."/>
            <person name="Kawai J."/>
            <person name="Hayashizaki Y."/>
        </authorList>
    </citation>
    <scope>NUCLEOTIDE SEQUENCE [LARGE SCALE MRNA] (ISOFORM 3)</scope>
    <scope>NUCLEOTIDE SEQUENCE [LARGE SCALE MRNA] OF 1-1283 (ISOFORM 1)</scope>
    <source>
        <strain>C57BL/6J</strain>
        <tissue>Head</tissue>
        <tissue>Heart</tissue>
        <tissue>Hippocampus</tissue>
        <tissue>Hypothalamus</tissue>
    </source>
</reference>
<reference key="2">
    <citation type="journal article" date="2009" name="PLoS Biol.">
        <title>Lineage-specific biology revealed by a finished genome assembly of the mouse.</title>
        <authorList>
            <person name="Church D.M."/>
            <person name="Goodstadt L."/>
            <person name="Hillier L.W."/>
            <person name="Zody M.C."/>
            <person name="Goldstein S."/>
            <person name="She X."/>
            <person name="Bult C.J."/>
            <person name="Agarwala R."/>
            <person name="Cherry J.L."/>
            <person name="DiCuccio M."/>
            <person name="Hlavina W."/>
            <person name="Kapustin Y."/>
            <person name="Meric P."/>
            <person name="Maglott D."/>
            <person name="Birtle Z."/>
            <person name="Marques A.C."/>
            <person name="Graves T."/>
            <person name="Zhou S."/>
            <person name="Teague B."/>
            <person name="Potamousis K."/>
            <person name="Churas C."/>
            <person name="Place M."/>
            <person name="Herschleb J."/>
            <person name="Runnheim R."/>
            <person name="Forrest D."/>
            <person name="Amos-Landgraf J."/>
            <person name="Schwartz D.C."/>
            <person name="Cheng Z."/>
            <person name="Lindblad-Toh K."/>
            <person name="Eichler E.E."/>
            <person name="Ponting C.P."/>
        </authorList>
    </citation>
    <scope>NUCLEOTIDE SEQUENCE [LARGE SCALE GENOMIC DNA]</scope>
    <source>
        <strain>C57BL/6J</strain>
    </source>
</reference>
<reference key="3">
    <citation type="journal article" date="2004" name="Genome Res.">
        <title>The status, quality, and expansion of the NIH full-length cDNA project: the Mammalian Gene Collection (MGC).</title>
        <authorList>
            <consortium name="The MGC Project Team"/>
        </authorList>
    </citation>
    <scope>NUCLEOTIDE SEQUENCE [LARGE SCALE MRNA] (ISOFORM 2)</scope>
    <source>
        <strain>C57BL/6J</strain>
        <tissue>Brain</tissue>
    </source>
</reference>
<reference key="4">
    <citation type="submission" date="2005-02" db="EMBL/GenBank/DDBJ databases">
        <title>Prediction of the coding sequences of mouse homologues of KIAA gene. The complete nucleotide sequences of mouse KIAA-homologous cDNAs identified by screening of terminal sequences of cDNA clones randomly sampled from size-fractionated libraries.</title>
        <authorList>
            <person name="Okazaki N."/>
            <person name="Kikuno R.F."/>
            <person name="Ohara R."/>
            <person name="Inamoto S."/>
            <person name="Nagase T."/>
            <person name="Ohara O."/>
            <person name="Koga H."/>
        </authorList>
    </citation>
    <scope>NUCLEOTIDE SEQUENCE [LARGE SCALE MRNA] OF 124-1452 (ISOFORM 1)</scope>
    <source>
        <tissue>Brain</tissue>
    </source>
</reference>
<reference key="5">
    <citation type="journal article" date="2010" name="Cell">
        <title>A tissue-specific atlas of mouse protein phosphorylation and expression.</title>
        <authorList>
            <person name="Huttlin E.L."/>
            <person name="Jedrychowski M.P."/>
            <person name="Elias J.E."/>
            <person name="Goswami T."/>
            <person name="Rad R."/>
            <person name="Beausoleil S.A."/>
            <person name="Villen J."/>
            <person name="Haas W."/>
            <person name="Sowa M.E."/>
            <person name="Gygi S.P."/>
        </authorList>
    </citation>
    <scope>IDENTIFICATION BY MASS SPECTROMETRY [LARGE SCALE ANALYSIS]</scope>
    <source>
        <tissue>Brain</tissue>
        <tissue>Kidney</tissue>
        <tissue>Liver</tissue>
        <tissue>Lung</tissue>
        <tissue>Pancreas</tissue>
        <tissue>Spleen</tissue>
        <tissue>Testis</tissue>
    </source>
</reference>
<dbReference type="EMBL" id="AK052391">
    <property type="protein sequence ID" value="BAC34972.1"/>
    <property type="molecule type" value="mRNA"/>
</dbReference>
<dbReference type="EMBL" id="AK053037">
    <property type="protein sequence ID" value="BAC35246.1"/>
    <property type="status" value="ALT_FRAME"/>
    <property type="molecule type" value="mRNA"/>
</dbReference>
<dbReference type="EMBL" id="AK079542">
    <property type="protein sequence ID" value="BAC37677.2"/>
    <property type="molecule type" value="mRNA"/>
</dbReference>
<dbReference type="EMBL" id="AK164172">
    <property type="protein sequence ID" value="BAE37661.1"/>
    <property type="status" value="ALT_INIT"/>
    <property type="molecule type" value="mRNA"/>
</dbReference>
<dbReference type="EMBL" id="AC151264">
    <property type="status" value="NOT_ANNOTATED_CDS"/>
    <property type="molecule type" value="Genomic_DNA"/>
</dbReference>
<dbReference type="EMBL" id="AC151284">
    <property type="status" value="NOT_ANNOTATED_CDS"/>
    <property type="molecule type" value="Genomic_DNA"/>
</dbReference>
<dbReference type="EMBL" id="BC086652">
    <property type="protein sequence ID" value="AAH86652.1"/>
    <property type="molecule type" value="mRNA"/>
</dbReference>
<dbReference type="EMBL" id="AK220390">
    <property type="protein sequence ID" value="BAD90444.1"/>
    <property type="status" value="ALT_SEQ"/>
    <property type="molecule type" value="Transcribed_RNA"/>
</dbReference>
<dbReference type="CCDS" id="CCDS37697.1">
    <molecule id="Q8C547-1"/>
</dbReference>
<dbReference type="RefSeq" id="NP_001074648.1">
    <molecule id="Q8C547-1"/>
    <property type="nucleotide sequence ID" value="NM_001081179.1"/>
</dbReference>
<dbReference type="FunCoup" id="Q8C547">
    <property type="interactions" value="5036"/>
</dbReference>
<dbReference type="IntAct" id="Q8C547">
    <property type="interactions" value="2"/>
</dbReference>
<dbReference type="STRING" id="10090.ENSMUSP00000094882"/>
<dbReference type="iPTMnet" id="Q8C547"/>
<dbReference type="PhosphoSitePlus" id="Q8C547"/>
<dbReference type="SwissPalm" id="Q8C547"/>
<dbReference type="jPOST" id="Q8C547"/>
<dbReference type="PaxDb" id="10090-ENSMUSP00000094882"/>
<dbReference type="PeptideAtlas" id="Q8C547"/>
<dbReference type="ProteomicsDB" id="273350">
    <molecule id="Q8C547-1"/>
</dbReference>
<dbReference type="ProteomicsDB" id="273351">
    <molecule id="Q8C547-2"/>
</dbReference>
<dbReference type="ProteomicsDB" id="273352">
    <molecule id="Q8C547-3"/>
</dbReference>
<dbReference type="ProteomicsDB" id="273353">
    <molecule id="Q8C547-4"/>
</dbReference>
<dbReference type="Pumba" id="Q8C547"/>
<dbReference type="Antibodypedia" id="52336">
    <property type="antibodies" value="14 antibodies from 7 providers"/>
</dbReference>
<dbReference type="DNASU" id="320473"/>
<dbReference type="Ensembl" id="ENSMUST00000097281.4">
    <molecule id="Q8C547-1"/>
    <property type="protein sequence ID" value="ENSMUSP00000094882.3"/>
    <property type="gene ID" value="ENSMUSG00000039414.11"/>
</dbReference>
<dbReference type="GeneID" id="320473"/>
<dbReference type="KEGG" id="mmu:320473"/>
<dbReference type="UCSC" id="uc008dpb.1">
    <molecule id="Q8C547-4"/>
    <property type="organism name" value="mouse"/>
</dbReference>
<dbReference type="UCSC" id="uc008dpc.1">
    <molecule id="Q8C547-1"/>
    <property type="organism name" value="mouse"/>
</dbReference>
<dbReference type="UCSC" id="uc008dpe.1">
    <molecule id="Q8C547-3"/>
    <property type="organism name" value="mouse"/>
</dbReference>
<dbReference type="AGR" id="MGI:2444098"/>
<dbReference type="CTD" id="54497"/>
<dbReference type="MGI" id="MGI:2444098">
    <property type="gene designation" value="Heatr5b"/>
</dbReference>
<dbReference type="VEuPathDB" id="HostDB:ENSMUSG00000039414"/>
<dbReference type="eggNOG" id="KOG1822">
    <property type="taxonomic scope" value="Eukaryota"/>
</dbReference>
<dbReference type="GeneTree" id="ENSGT00390000006205"/>
<dbReference type="HOGENOM" id="CLU_000652_0_0_1"/>
<dbReference type="InParanoid" id="Q8C547"/>
<dbReference type="OMA" id="YPQVIQE"/>
<dbReference type="OrthoDB" id="192608at2759"/>
<dbReference type="PhylomeDB" id="Q8C547"/>
<dbReference type="TreeFam" id="TF300706"/>
<dbReference type="BioGRID-ORCS" id="320473">
    <property type="hits" value="1 hit in 77 CRISPR screens"/>
</dbReference>
<dbReference type="PRO" id="PR:Q8C547"/>
<dbReference type="Proteomes" id="UP000000589">
    <property type="component" value="Chromosome 17"/>
</dbReference>
<dbReference type="RNAct" id="Q8C547">
    <property type="molecule type" value="protein"/>
</dbReference>
<dbReference type="Bgee" id="ENSMUSG00000039414">
    <property type="expression patterns" value="Expressed in primary oocyte and 224 other cell types or tissues"/>
</dbReference>
<dbReference type="ExpressionAtlas" id="Q8C547">
    <property type="expression patterns" value="baseline and differential"/>
</dbReference>
<dbReference type="GO" id="GO:0030136">
    <property type="term" value="C:clathrin-coated vesicle"/>
    <property type="evidence" value="ECO:0007669"/>
    <property type="project" value="UniProtKB-SubCell"/>
</dbReference>
<dbReference type="GO" id="GO:0005829">
    <property type="term" value="C:cytosol"/>
    <property type="evidence" value="ECO:0007669"/>
    <property type="project" value="Ensembl"/>
</dbReference>
<dbReference type="GO" id="GO:0005794">
    <property type="term" value="C:Golgi apparatus"/>
    <property type="evidence" value="ECO:0007669"/>
    <property type="project" value="Ensembl"/>
</dbReference>
<dbReference type="GO" id="GO:0005654">
    <property type="term" value="C:nucleoplasm"/>
    <property type="evidence" value="ECO:0007669"/>
    <property type="project" value="Ensembl"/>
</dbReference>
<dbReference type="GO" id="GO:0048471">
    <property type="term" value="C:perinuclear region of cytoplasm"/>
    <property type="evidence" value="ECO:0007669"/>
    <property type="project" value="UniProtKB-SubCell"/>
</dbReference>
<dbReference type="GO" id="GO:0015031">
    <property type="term" value="P:protein transport"/>
    <property type="evidence" value="ECO:0007669"/>
    <property type="project" value="UniProtKB-KW"/>
</dbReference>
<dbReference type="FunFam" id="1.25.10.10:FF:000203">
    <property type="entry name" value="HEAT repeat containing 5B"/>
    <property type="match status" value="1"/>
</dbReference>
<dbReference type="FunFam" id="1.25.10.10:FF:000262">
    <property type="entry name" value="HEAT repeat-containing protein 5B"/>
    <property type="match status" value="1"/>
</dbReference>
<dbReference type="FunFam" id="1.25.10.10:FF:000202">
    <property type="entry name" value="HEAT repeat-containing protein 5B isoform X1"/>
    <property type="match status" value="1"/>
</dbReference>
<dbReference type="Gene3D" id="1.25.10.10">
    <property type="entry name" value="Leucine-rich Repeat Variant"/>
    <property type="match status" value="3"/>
</dbReference>
<dbReference type="InterPro" id="IPR011989">
    <property type="entry name" value="ARM-like"/>
</dbReference>
<dbReference type="InterPro" id="IPR016024">
    <property type="entry name" value="ARM-type_fold"/>
</dbReference>
<dbReference type="InterPro" id="IPR040108">
    <property type="entry name" value="Laa1/Sip1/HEATR5"/>
</dbReference>
<dbReference type="InterPro" id="IPR046837">
    <property type="entry name" value="Laa1/Sip1/HEATR5-like_HEAT"/>
</dbReference>
<dbReference type="PANTHER" id="PTHR21663:SF2">
    <property type="entry name" value="HEAT REPEAT-CONTAINING PROTEIN 5B"/>
    <property type="match status" value="1"/>
</dbReference>
<dbReference type="PANTHER" id="PTHR21663">
    <property type="entry name" value="HYPOTHETICAL HEAT DOMAIN-CONTAINING"/>
    <property type="match status" value="1"/>
</dbReference>
<dbReference type="Pfam" id="PF25468">
    <property type="entry name" value="HEAT_HEATR5A"/>
    <property type="match status" value="1"/>
</dbReference>
<dbReference type="Pfam" id="PF20210">
    <property type="entry name" value="Laa1_Sip1_HTR5"/>
    <property type="match status" value="1"/>
</dbReference>
<dbReference type="SUPFAM" id="SSF48371">
    <property type="entry name" value="ARM repeat"/>
    <property type="match status" value="2"/>
</dbReference>
<evidence type="ECO:0000250" key="1">
    <source>
        <dbReference type="UniProtKB" id="Q9P2D3"/>
    </source>
</evidence>
<evidence type="ECO:0000303" key="2">
    <source>
    </source>
</evidence>
<evidence type="ECO:0000303" key="3">
    <source>
    </source>
</evidence>
<evidence type="ECO:0000305" key="4"/>
<keyword id="KW-0025">Alternative splicing</keyword>
<keyword id="KW-0963">Cytoplasm</keyword>
<keyword id="KW-0968">Cytoplasmic vesicle</keyword>
<keyword id="KW-0597">Phosphoprotein</keyword>
<keyword id="KW-0653">Protein transport</keyword>
<keyword id="KW-1185">Reference proteome</keyword>
<keyword id="KW-0677">Repeat</keyword>
<keyword id="KW-0813">Transport</keyword>
<protein>
    <recommendedName>
        <fullName>HEAT repeat-containing protein 5B</fullName>
    </recommendedName>
</protein>
<gene>
    <name type="primary">Heatr5b</name>
    <name type="synonym">Kiaa1414</name>
</gene>
<organism>
    <name type="scientific">Mus musculus</name>
    <name type="common">Mouse</name>
    <dbReference type="NCBI Taxonomy" id="10090"/>
    <lineage>
        <taxon>Eukaryota</taxon>
        <taxon>Metazoa</taxon>
        <taxon>Chordata</taxon>
        <taxon>Craniata</taxon>
        <taxon>Vertebrata</taxon>
        <taxon>Euteleostomi</taxon>
        <taxon>Mammalia</taxon>
        <taxon>Eutheria</taxon>
        <taxon>Euarchontoglires</taxon>
        <taxon>Glires</taxon>
        <taxon>Rodentia</taxon>
        <taxon>Myomorpha</taxon>
        <taxon>Muroidea</taxon>
        <taxon>Muridae</taxon>
        <taxon>Murinae</taxon>
        <taxon>Mus</taxon>
        <taxon>Mus</taxon>
    </lineage>
</organism>
<accession>Q8C547</accession>
<accession>Q3TPS4</accession>
<accession>Q5DTY0</accession>
<accession>Q5PRF1</accession>
<accession>Q8C6W1</accession>
<accession>Q8C773</accession>
<comment type="function">
    <text evidence="1">Component of clathrin-coated vesicles (By similarity). Component of the aftiphilin/p200/gamma-synergin complex, which plays roles in AP1G1/AP-1-mediated protein trafficking including the trafficking of transferrin from early to recycling endosomes, and the membrane trafficking of furin and the lysosomal enzyme cathepsin D between the trans-Golgi network (TGN) and endosomes (By similarity).</text>
</comment>
<comment type="subunit">
    <text evidence="1">Self-associates (By similarity). Component of the aftiphilin/p200/gamma-synergin complex, at least composed of AFTPH/aftiphilin, HEATR5B/p200a and SYNRG/gamma-synergin, which plays a role in the AP1G1/AP-1-mediated protein trafficking from early to recycling endosomes and between the trans-Golgi network (TGN) and endosomes (By similarity). Within the complex interacts with AFTPH/aftiphilin and SYNRG/gamma-synergin; the interactions are direct (By similarity). Interacts with GGA1 (By similarity).</text>
</comment>
<comment type="subcellular location">
    <subcellularLocation>
        <location evidence="1">Cytoplasm</location>
        <location evidence="1">Perinuclear region</location>
    </subcellularLocation>
    <subcellularLocation>
        <location evidence="1">Cytoplasmic vesicle</location>
        <location evidence="1">Clathrin-coated vesicle</location>
    </subcellularLocation>
    <text evidence="1">Localization at clathrin-coated vesicles depends on AFTPH/aftiphilin.</text>
</comment>
<comment type="alternative products">
    <event type="alternative splicing"/>
    <isoform>
        <id>Q8C547-1</id>
        <name>1</name>
        <sequence type="displayed"/>
    </isoform>
    <isoform>
        <id>Q8C547-2</id>
        <name>2</name>
        <sequence type="described" ref="VSP_029696"/>
    </isoform>
    <isoform>
        <id>Q8C547-3</id>
        <name>3</name>
        <sequence type="described" ref="VSP_029694 VSP_029695"/>
    </isoform>
    <isoform>
        <id>Q8C547-4</id>
        <name>4</name>
        <sequence type="described" ref="VSP_029693"/>
    </isoform>
</comment>
<comment type="similarity">
    <text evidence="4">Belongs to the HEATR5 family.</text>
</comment>
<comment type="sequence caution" evidence="4">
    <conflict type="frameshift">
        <sequence resource="EMBL-CDS" id="BAC35246"/>
    </conflict>
</comment>
<comment type="sequence caution" evidence="4">
    <conflict type="erroneous translation">
        <sequence resource="EMBL-CDS" id="BAD90444"/>
    </conflict>
</comment>
<comment type="sequence caution" evidence="4">
    <conflict type="frameshift">
        <sequence resource="EMBL-CDS" id="BAD90444"/>
    </conflict>
</comment>
<comment type="sequence caution" evidence="4">
    <conflict type="erroneous initiation">
        <sequence resource="EMBL-CDS" id="BAE37661"/>
    </conflict>
</comment>
<proteinExistence type="evidence at protein level"/>
<feature type="chain" id="PRO_0000311995" description="HEAT repeat-containing protein 5B">
    <location>
        <begin position="1"/>
        <end position="2070"/>
    </location>
</feature>
<feature type="repeat" description="HEAT 1">
    <location>
        <begin position="848"/>
        <end position="885"/>
    </location>
</feature>
<feature type="repeat" description="HEAT 2">
    <location>
        <begin position="1062"/>
        <end position="1099"/>
    </location>
</feature>
<feature type="repeat" description="HEAT 3">
    <location>
        <begin position="1290"/>
        <end position="1327"/>
    </location>
</feature>
<feature type="modified residue" description="Phosphoserine" evidence="1">
    <location>
        <position position="1737"/>
    </location>
</feature>
<feature type="splice variant" id="VSP_029693" description="In isoform 4." evidence="4">
    <location>
        <begin position="1"/>
        <end position="1433"/>
    </location>
</feature>
<feature type="splice variant" id="VSP_029694" description="In isoform 3." evidence="3">
    <original>QML</original>
    <variation>VKR</variation>
    <location>
        <begin position="802"/>
        <end position="804"/>
    </location>
</feature>
<feature type="splice variant" id="VSP_029695" description="In isoform 3." evidence="3">
    <location>
        <begin position="805"/>
        <end position="2070"/>
    </location>
</feature>
<feature type="splice variant" id="VSP_029696" description="In isoform 2." evidence="2">
    <location>
        <begin position="1059"/>
        <end position="2054"/>
    </location>
</feature>
<feature type="sequence conflict" description="In Ref. 1; BAC35246." evidence="4" ref="1">
    <original>S</original>
    <variation>T</variation>
    <location>
        <position position="159"/>
    </location>
</feature>
<feature type="sequence conflict" description="In Ref. 1; BAE37661." evidence="4" ref="1">
    <original>E</original>
    <variation>V</variation>
    <location>
        <position position="1183"/>
    </location>
</feature>
<feature type="sequence conflict" description="In Ref. 4; BAD90444." evidence="4" ref="4">
    <original>D</original>
    <variation>G</variation>
    <location>
        <position position="1294"/>
    </location>
</feature>
<name>HTR5B_MOUSE</name>